<feature type="chain" id="PRO_1000005924" description="DNA-directed RNA polymerase subunit omega">
    <location>
        <begin position="1"/>
        <end position="91"/>
    </location>
</feature>
<keyword id="KW-0240">DNA-directed RNA polymerase</keyword>
<keyword id="KW-0548">Nucleotidyltransferase</keyword>
<keyword id="KW-0804">Transcription</keyword>
<keyword id="KW-0808">Transferase</keyword>
<gene>
    <name evidence="1" type="primary">rpoZ</name>
    <name type="ordered locus">UTI89_C4194</name>
</gene>
<sequence length="91" mass="10237">MARVTVQDAVEKIGNRFDLVLVAARRARQMQVGGKDPLVPEENDKTTVIALREIEEGLINNQILDVRERQEQQEQEAAELQAVTAIAEGRR</sequence>
<proteinExistence type="inferred from homology"/>
<name>RPOZ_ECOUT</name>
<reference key="1">
    <citation type="journal article" date="2006" name="Proc. Natl. Acad. Sci. U.S.A.">
        <title>Identification of genes subject to positive selection in uropathogenic strains of Escherichia coli: a comparative genomics approach.</title>
        <authorList>
            <person name="Chen S.L."/>
            <person name="Hung C.-S."/>
            <person name="Xu J."/>
            <person name="Reigstad C.S."/>
            <person name="Magrini V."/>
            <person name="Sabo A."/>
            <person name="Blasiar D."/>
            <person name="Bieri T."/>
            <person name="Meyer R.R."/>
            <person name="Ozersky P."/>
            <person name="Armstrong J.R."/>
            <person name="Fulton R.S."/>
            <person name="Latreille J.P."/>
            <person name="Spieth J."/>
            <person name="Hooton T.M."/>
            <person name="Mardis E.R."/>
            <person name="Hultgren S.J."/>
            <person name="Gordon J.I."/>
        </authorList>
    </citation>
    <scope>NUCLEOTIDE SEQUENCE [LARGE SCALE GENOMIC DNA]</scope>
    <source>
        <strain>UTI89 / UPEC</strain>
    </source>
</reference>
<evidence type="ECO:0000255" key="1">
    <source>
        <dbReference type="HAMAP-Rule" id="MF_00366"/>
    </source>
</evidence>
<dbReference type="EC" id="2.7.7.6" evidence="1"/>
<dbReference type="EMBL" id="CP000243">
    <property type="protein sequence ID" value="ABE09622.1"/>
    <property type="molecule type" value="Genomic_DNA"/>
</dbReference>
<dbReference type="RefSeq" id="WP_000135058.1">
    <property type="nucleotide sequence ID" value="NZ_CP064825.1"/>
</dbReference>
<dbReference type="SMR" id="Q1R4U2"/>
<dbReference type="GeneID" id="98390719"/>
<dbReference type="KEGG" id="eci:UTI89_C4194"/>
<dbReference type="HOGENOM" id="CLU_125406_5_3_6"/>
<dbReference type="Proteomes" id="UP000001952">
    <property type="component" value="Chromosome"/>
</dbReference>
<dbReference type="GO" id="GO:0000428">
    <property type="term" value="C:DNA-directed RNA polymerase complex"/>
    <property type="evidence" value="ECO:0007669"/>
    <property type="project" value="UniProtKB-KW"/>
</dbReference>
<dbReference type="GO" id="GO:0003677">
    <property type="term" value="F:DNA binding"/>
    <property type="evidence" value="ECO:0007669"/>
    <property type="project" value="UniProtKB-UniRule"/>
</dbReference>
<dbReference type="GO" id="GO:0003899">
    <property type="term" value="F:DNA-directed RNA polymerase activity"/>
    <property type="evidence" value="ECO:0007669"/>
    <property type="project" value="UniProtKB-UniRule"/>
</dbReference>
<dbReference type="GO" id="GO:0006351">
    <property type="term" value="P:DNA-templated transcription"/>
    <property type="evidence" value="ECO:0007669"/>
    <property type="project" value="UniProtKB-UniRule"/>
</dbReference>
<dbReference type="FunFam" id="3.90.940.10:FF:000001">
    <property type="entry name" value="DNA-directed RNA polymerase subunit omega"/>
    <property type="match status" value="1"/>
</dbReference>
<dbReference type="Gene3D" id="3.90.940.10">
    <property type="match status" value="1"/>
</dbReference>
<dbReference type="HAMAP" id="MF_00366">
    <property type="entry name" value="RNApol_bact_RpoZ"/>
    <property type="match status" value="1"/>
</dbReference>
<dbReference type="InterPro" id="IPR003716">
    <property type="entry name" value="DNA-dir_RNA_pol_omega"/>
</dbReference>
<dbReference type="InterPro" id="IPR006110">
    <property type="entry name" value="Pol_omega/Rpo6/RPB6"/>
</dbReference>
<dbReference type="InterPro" id="IPR036161">
    <property type="entry name" value="RPB6/omega-like_sf"/>
</dbReference>
<dbReference type="NCBIfam" id="TIGR00690">
    <property type="entry name" value="rpoZ"/>
    <property type="match status" value="1"/>
</dbReference>
<dbReference type="PANTHER" id="PTHR34476">
    <property type="entry name" value="DNA-DIRECTED RNA POLYMERASE SUBUNIT OMEGA"/>
    <property type="match status" value="1"/>
</dbReference>
<dbReference type="PANTHER" id="PTHR34476:SF1">
    <property type="entry name" value="DNA-DIRECTED RNA POLYMERASE SUBUNIT OMEGA"/>
    <property type="match status" value="1"/>
</dbReference>
<dbReference type="Pfam" id="PF01192">
    <property type="entry name" value="RNA_pol_Rpb6"/>
    <property type="match status" value="1"/>
</dbReference>
<dbReference type="SMART" id="SM01409">
    <property type="entry name" value="RNA_pol_Rpb6"/>
    <property type="match status" value="1"/>
</dbReference>
<dbReference type="SUPFAM" id="SSF63562">
    <property type="entry name" value="RPB6/omega subunit-like"/>
    <property type="match status" value="1"/>
</dbReference>
<protein>
    <recommendedName>
        <fullName evidence="1">DNA-directed RNA polymerase subunit omega</fullName>
        <shortName evidence="1">RNAP omega subunit</shortName>
        <ecNumber evidence="1">2.7.7.6</ecNumber>
    </recommendedName>
    <alternativeName>
        <fullName evidence="1">RNA polymerase omega subunit</fullName>
    </alternativeName>
    <alternativeName>
        <fullName evidence="1">Transcriptase subunit omega</fullName>
    </alternativeName>
</protein>
<organism>
    <name type="scientific">Escherichia coli (strain UTI89 / UPEC)</name>
    <dbReference type="NCBI Taxonomy" id="364106"/>
    <lineage>
        <taxon>Bacteria</taxon>
        <taxon>Pseudomonadati</taxon>
        <taxon>Pseudomonadota</taxon>
        <taxon>Gammaproteobacteria</taxon>
        <taxon>Enterobacterales</taxon>
        <taxon>Enterobacteriaceae</taxon>
        <taxon>Escherichia</taxon>
    </lineage>
</organism>
<accession>Q1R4U2</accession>
<comment type="function">
    <text evidence="1">Promotes RNA polymerase assembly. Latches the N- and C-terminal regions of the beta' subunit thereby facilitating its interaction with the beta and alpha subunits.</text>
</comment>
<comment type="catalytic activity">
    <reaction evidence="1">
        <text>RNA(n) + a ribonucleoside 5'-triphosphate = RNA(n+1) + diphosphate</text>
        <dbReference type="Rhea" id="RHEA:21248"/>
        <dbReference type="Rhea" id="RHEA-COMP:14527"/>
        <dbReference type="Rhea" id="RHEA-COMP:17342"/>
        <dbReference type="ChEBI" id="CHEBI:33019"/>
        <dbReference type="ChEBI" id="CHEBI:61557"/>
        <dbReference type="ChEBI" id="CHEBI:140395"/>
        <dbReference type="EC" id="2.7.7.6"/>
    </reaction>
</comment>
<comment type="subunit">
    <text evidence="1">The RNAP catalytic core consists of 2 alpha, 1 beta, 1 beta' and 1 omega subunit. When a sigma factor is associated with the core the holoenzyme is formed, which can initiate transcription.</text>
</comment>
<comment type="similarity">
    <text evidence="1">Belongs to the RNA polymerase subunit omega family.</text>
</comment>